<feature type="chain" id="PRO_0000411695" description="Vacuolar membrane protease">
    <location>
        <begin position="1"/>
        <end position="963"/>
    </location>
</feature>
<feature type="topological domain" description="Cytoplasmic" evidence="1">
    <location>
        <begin position="1"/>
        <end position="15"/>
    </location>
</feature>
<feature type="transmembrane region" description="Helical; Name=1" evidence="3">
    <location>
        <begin position="16"/>
        <end position="36"/>
    </location>
</feature>
<feature type="topological domain" description="Vacuolar" evidence="1">
    <location>
        <begin position="37"/>
        <end position="391"/>
    </location>
</feature>
<feature type="transmembrane region" description="Helical; Name=2" evidence="3">
    <location>
        <begin position="392"/>
        <end position="412"/>
    </location>
</feature>
<feature type="topological domain" description="Cytoplasmic" evidence="1">
    <location>
        <begin position="413"/>
        <end position="441"/>
    </location>
</feature>
<feature type="transmembrane region" description="Helical; Name=3" evidence="3">
    <location>
        <begin position="442"/>
        <end position="462"/>
    </location>
</feature>
<feature type="topological domain" description="Vacuolar" evidence="1">
    <location>
        <begin position="463"/>
        <end position="473"/>
    </location>
</feature>
<feature type="transmembrane region" description="Helical; Name=4" evidence="3">
    <location>
        <begin position="474"/>
        <end position="494"/>
    </location>
</feature>
<feature type="topological domain" description="Cytoplasmic" evidence="1">
    <location>
        <begin position="495"/>
        <end position="504"/>
    </location>
</feature>
<feature type="transmembrane region" description="Helical; Name=5" evidence="3">
    <location>
        <begin position="505"/>
        <end position="525"/>
    </location>
</feature>
<feature type="topological domain" description="Vacuolar" evidence="1">
    <location>
        <begin position="526"/>
        <end position="535"/>
    </location>
</feature>
<feature type="transmembrane region" description="Helical; Name=6" evidence="3">
    <location>
        <begin position="536"/>
        <end position="556"/>
    </location>
</feature>
<feature type="topological domain" description="Cytoplasmic" evidence="1">
    <location>
        <begin position="557"/>
        <end position="668"/>
    </location>
</feature>
<feature type="transmembrane region" description="Helical; Name=7" evidence="3">
    <location>
        <begin position="669"/>
        <end position="689"/>
    </location>
</feature>
<feature type="topological domain" description="Vacuolar" evidence="1">
    <location>
        <begin position="690"/>
        <end position="705"/>
    </location>
</feature>
<feature type="transmembrane region" description="Helical; Name=8" evidence="3">
    <location>
        <begin position="706"/>
        <end position="726"/>
    </location>
</feature>
<feature type="topological domain" description="Cytoplasmic" evidence="1">
    <location>
        <begin position="727"/>
        <end position="732"/>
    </location>
</feature>
<feature type="transmembrane region" description="Helical; Name=9" evidence="3">
    <location>
        <begin position="733"/>
        <end position="753"/>
    </location>
</feature>
<feature type="topological domain" description="Vacuolar" evidence="1">
    <location>
        <begin position="754"/>
        <end position="963"/>
    </location>
</feature>
<feature type="region of interest" description="Disordered" evidence="5">
    <location>
        <begin position="569"/>
        <end position="618"/>
    </location>
</feature>
<feature type="compositionally biased region" description="Acidic residues" evidence="5">
    <location>
        <begin position="603"/>
        <end position="612"/>
    </location>
</feature>
<feature type="active site" description="Proton acceptor" evidence="2">
    <location>
        <position position="216"/>
    </location>
</feature>
<feature type="binding site" evidence="2">
    <location>
        <position position="170"/>
    </location>
    <ligand>
        <name>Zn(2+)</name>
        <dbReference type="ChEBI" id="CHEBI:29105"/>
        <label>1</label>
        <note>catalytic</note>
    </ligand>
</feature>
<feature type="binding site" evidence="2">
    <location>
        <position position="182"/>
    </location>
    <ligand>
        <name>Zn(2+)</name>
        <dbReference type="ChEBI" id="CHEBI:29105"/>
        <label>1</label>
        <note>catalytic</note>
    </ligand>
</feature>
<feature type="binding site" evidence="2">
    <location>
        <position position="182"/>
    </location>
    <ligand>
        <name>Zn(2+)</name>
        <dbReference type="ChEBI" id="CHEBI:29105"/>
        <label>2</label>
        <note>catalytic</note>
    </ligand>
</feature>
<feature type="binding site" evidence="2">
    <location>
        <position position="217"/>
    </location>
    <ligand>
        <name>Zn(2+)</name>
        <dbReference type="ChEBI" id="CHEBI:29105"/>
        <label>2</label>
        <note>catalytic</note>
    </ligand>
</feature>
<feature type="binding site" evidence="2">
    <location>
        <position position="242"/>
    </location>
    <ligand>
        <name>Zn(2+)</name>
        <dbReference type="ChEBI" id="CHEBI:29105"/>
        <label>1</label>
        <note>catalytic</note>
    </ligand>
</feature>
<feature type="binding site" evidence="2">
    <location>
        <position position="315"/>
    </location>
    <ligand>
        <name>Zn(2+)</name>
        <dbReference type="ChEBI" id="CHEBI:29105"/>
        <label>2</label>
        <note>catalytic</note>
    </ligand>
</feature>
<feature type="site" description="Transition state stabilizer" evidence="2">
    <location>
        <position position="314"/>
    </location>
</feature>
<feature type="glycosylation site" description="N-linked (GlcNAc...) asparagine" evidence="4">
    <location>
        <position position="111"/>
    </location>
</feature>
<feature type="glycosylation site" description="N-linked (GlcNAc...) asparagine" evidence="4">
    <location>
        <position position="114"/>
    </location>
</feature>
<feature type="glycosylation site" description="N-linked (GlcNAc...) asparagine" evidence="4">
    <location>
        <position position="835"/>
    </location>
</feature>
<protein>
    <recommendedName>
        <fullName evidence="1">Vacuolar membrane protease</fullName>
        <ecNumber evidence="6">3.4.-.-</ecNumber>
    </recommendedName>
    <alternativeName>
        <fullName evidence="1">FXNA-related family protease 1</fullName>
    </alternativeName>
</protein>
<comment type="function">
    <text evidence="1">May be involved in vacuolar sorting and osmoregulation.</text>
</comment>
<comment type="cofactor">
    <cofactor evidence="2">
        <name>Zn(2+)</name>
        <dbReference type="ChEBI" id="CHEBI:29105"/>
    </cofactor>
    <text evidence="2">Binds 2 Zn(2+) ions per subunit.</text>
</comment>
<comment type="subcellular location">
    <subcellularLocation>
        <location evidence="1">Vacuole membrane</location>
        <topology evidence="3">Multi-pass membrane protein</topology>
    </subcellularLocation>
</comment>
<comment type="similarity">
    <text evidence="6">Belongs to the peptidase M28 family.</text>
</comment>
<sequence>MVSSRRGFNPIAFTPWPVTILTSLVYLALIIPIIVVHHLVPPAPKQSPPGVDLEEAWHDLQHLTRQYHPYNSHSNDEVHQWLLKRIRAISATTSARSESQGGPEVFVFDDNQTNLTFSSAGVAATAITGVYFESKNIVVYIRGTEDEPGEWWKSPDGEPSGKGGVLVNAHYDSVSTGYGATDNGVGVITTLQLLKYFTTPGHYPRKGLVLLFNNGEEDFLNGAYAYSQHPMSKFTHTFLNLEGAGAGGRAVLFRSTDTEITRFYGKSQHPFGTVLARDAFKLGFIRSETDYHVFDGVFGMRGLDVAFMEPRSRYHTDQDDARHTSIDSVWHMLSAAITTTEGLVSYTGNEFDGDSGEGGKLNNGVGTLGVWFDFFGSSLAVFQLNTLFGLSVALLVVAPLLLILTSVALFAVDKMYMFSMYTYLSESGGQVSLYGLRGMFRFPLILGISTALTVALAFLIMKVNPFIIYSSPYAVWSMMLSTCMFFAWFISCVADFARPSALHRAYAFSWMFGILWVFLVIATVYQRQHGIASSYFIVFYFAGVSVATWISYLELFGLSTTQDYARRQSRLSDRTPSSDSHLLAPSADELPSSGSVAGRDFNPEDVEDEEPTESTSLLRGQQRTTFANYASARGSQESNISNQGSSLLHPKNNRLEQKWSIYLVSSAWILQFLLVAPIVLILLGQLGLFLTSATYQIGADGGSQFIIYIGIAVLSVLILLPLFPFIHRFTYHIPTFMLFVLIGTLVYNLTAFPFSHNSRLKVAFVQEMDLGTGKNQASLVGVEPYIRDIVHAIPFVNDEEISCTSKGYGGRTKCSWPGLRPTVVDGPYKDWVTYNISQTKEDKTTRFEVSGKNTRACKLLFDSPISDFHVHGSVVDKRIPHTGSKGVSEVRLWSRNWENTWTVDVEWTKKSAERTGRVMCLWSDDNDLNLIPELDMIRKFAPWWVAITKLRDGLVEGSYSFKL</sequence>
<organism>
    <name type="scientific">Arthroderma gypseum (strain ATCC MYA-4604 / CBS 118893)</name>
    <name type="common">Microsporum gypseum</name>
    <dbReference type="NCBI Taxonomy" id="535722"/>
    <lineage>
        <taxon>Eukaryota</taxon>
        <taxon>Fungi</taxon>
        <taxon>Dikarya</taxon>
        <taxon>Ascomycota</taxon>
        <taxon>Pezizomycotina</taxon>
        <taxon>Eurotiomycetes</taxon>
        <taxon>Eurotiomycetidae</taxon>
        <taxon>Onygenales</taxon>
        <taxon>Arthrodermataceae</taxon>
        <taxon>Nannizzia</taxon>
    </lineage>
</organism>
<gene>
    <name type="ORF">MGYG_01137</name>
</gene>
<name>PFF1_ARTGP</name>
<reference key="1">
    <citation type="journal article" date="2012" name="MBio">
        <title>Comparative genome analysis of Trichophyton rubrum and related dermatophytes reveals candidate genes involved in infection.</title>
        <authorList>
            <person name="Martinez D.A."/>
            <person name="Oliver B.G."/>
            <person name="Graeser Y."/>
            <person name="Goldberg J.M."/>
            <person name="Li W."/>
            <person name="Martinez-Rossi N.M."/>
            <person name="Monod M."/>
            <person name="Shelest E."/>
            <person name="Barton R.C."/>
            <person name="Birch E."/>
            <person name="Brakhage A.A."/>
            <person name="Chen Z."/>
            <person name="Gurr S.J."/>
            <person name="Heiman D."/>
            <person name="Heitman J."/>
            <person name="Kosti I."/>
            <person name="Rossi A."/>
            <person name="Saif S."/>
            <person name="Samalova M."/>
            <person name="Saunders C.W."/>
            <person name="Shea T."/>
            <person name="Summerbell R.C."/>
            <person name="Xu J."/>
            <person name="Young S."/>
            <person name="Zeng Q."/>
            <person name="Birren B.W."/>
            <person name="Cuomo C.A."/>
            <person name="White T.C."/>
        </authorList>
    </citation>
    <scope>NUCLEOTIDE SEQUENCE [LARGE SCALE GENOMIC DNA]</scope>
    <source>
        <strain>ATCC MYA-4604 / CBS 118893</strain>
    </source>
</reference>
<accession>E5QYX6</accession>
<evidence type="ECO:0000250" key="1">
    <source>
        <dbReference type="UniProtKB" id="P38244"/>
    </source>
</evidence>
<evidence type="ECO:0000250" key="2">
    <source>
        <dbReference type="UniProtKB" id="P80561"/>
    </source>
</evidence>
<evidence type="ECO:0000255" key="3"/>
<evidence type="ECO:0000255" key="4">
    <source>
        <dbReference type="PROSITE-ProRule" id="PRU00498"/>
    </source>
</evidence>
<evidence type="ECO:0000256" key="5">
    <source>
        <dbReference type="SAM" id="MobiDB-lite"/>
    </source>
</evidence>
<evidence type="ECO:0000305" key="6"/>
<proteinExistence type="inferred from homology"/>
<keyword id="KW-0325">Glycoprotein</keyword>
<keyword id="KW-0378">Hydrolase</keyword>
<keyword id="KW-0472">Membrane</keyword>
<keyword id="KW-0479">Metal-binding</keyword>
<keyword id="KW-0482">Metalloprotease</keyword>
<keyword id="KW-0645">Protease</keyword>
<keyword id="KW-1185">Reference proteome</keyword>
<keyword id="KW-0812">Transmembrane</keyword>
<keyword id="KW-1133">Transmembrane helix</keyword>
<keyword id="KW-0926">Vacuole</keyword>
<keyword id="KW-0862">Zinc</keyword>
<dbReference type="EC" id="3.4.-.-" evidence="6"/>
<dbReference type="EMBL" id="DS989822">
    <property type="protein sequence ID" value="EFQ98099.1"/>
    <property type="molecule type" value="Genomic_DNA"/>
</dbReference>
<dbReference type="RefSeq" id="XP_003177051.1">
    <property type="nucleotide sequence ID" value="XM_003177003.1"/>
</dbReference>
<dbReference type="SMR" id="E5QYX6"/>
<dbReference type="FunCoup" id="E5QYX6">
    <property type="interactions" value="5"/>
</dbReference>
<dbReference type="STRING" id="535722.E5QYX6"/>
<dbReference type="GeneID" id="10032376"/>
<dbReference type="VEuPathDB" id="FungiDB:MGYG_01137"/>
<dbReference type="eggNOG" id="KOG2194">
    <property type="taxonomic scope" value="Eukaryota"/>
</dbReference>
<dbReference type="HOGENOM" id="CLU_006412_1_0_1"/>
<dbReference type="InParanoid" id="E5QYX6"/>
<dbReference type="OMA" id="TPWPVTI"/>
<dbReference type="OrthoDB" id="10257471at2759"/>
<dbReference type="Proteomes" id="UP000002669">
    <property type="component" value="Unassembled WGS sequence"/>
</dbReference>
<dbReference type="GO" id="GO:0005774">
    <property type="term" value="C:vacuolar membrane"/>
    <property type="evidence" value="ECO:0007669"/>
    <property type="project" value="UniProtKB-SubCell"/>
</dbReference>
<dbReference type="GO" id="GO:0046872">
    <property type="term" value="F:metal ion binding"/>
    <property type="evidence" value="ECO:0007669"/>
    <property type="project" value="UniProtKB-KW"/>
</dbReference>
<dbReference type="GO" id="GO:0008235">
    <property type="term" value="F:metalloexopeptidase activity"/>
    <property type="evidence" value="ECO:0007669"/>
    <property type="project" value="InterPro"/>
</dbReference>
<dbReference type="GO" id="GO:0006508">
    <property type="term" value="P:proteolysis"/>
    <property type="evidence" value="ECO:0007669"/>
    <property type="project" value="UniProtKB-KW"/>
</dbReference>
<dbReference type="CDD" id="cd03875">
    <property type="entry name" value="M28_Fxna_like"/>
    <property type="match status" value="1"/>
</dbReference>
<dbReference type="FunFam" id="3.40.630.10:FF:000057">
    <property type="entry name" value="Vacuolar membrane protease"/>
    <property type="match status" value="1"/>
</dbReference>
<dbReference type="Gene3D" id="3.40.630.10">
    <property type="entry name" value="Zn peptidases"/>
    <property type="match status" value="1"/>
</dbReference>
<dbReference type="InterPro" id="IPR048024">
    <property type="entry name" value="Fxna-like_M28_dom"/>
</dbReference>
<dbReference type="InterPro" id="IPR045175">
    <property type="entry name" value="M28_fam"/>
</dbReference>
<dbReference type="InterPro" id="IPR007484">
    <property type="entry name" value="Peptidase_M28"/>
</dbReference>
<dbReference type="InterPro" id="IPR053975">
    <property type="entry name" value="PFF1_C"/>
</dbReference>
<dbReference type="InterPro" id="IPR053976">
    <property type="entry name" value="PFF1_TM"/>
</dbReference>
<dbReference type="PANTHER" id="PTHR12147">
    <property type="entry name" value="METALLOPEPTIDASE M28 FAMILY MEMBER"/>
    <property type="match status" value="1"/>
</dbReference>
<dbReference type="PANTHER" id="PTHR12147:SF58">
    <property type="entry name" value="VACUOLAR MEMBRANE PROTEASE"/>
    <property type="match status" value="1"/>
</dbReference>
<dbReference type="Pfam" id="PF04389">
    <property type="entry name" value="Peptidase_M28"/>
    <property type="match status" value="1"/>
</dbReference>
<dbReference type="Pfam" id="PF22250">
    <property type="entry name" value="PFF1_C"/>
    <property type="match status" value="1"/>
</dbReference>
<dbReference type="Pfam" id="PF22251">
    <property type="entry name" value="PFF1_TM"/>
    <property type="match status" value="1"/>
</dbReference>
<dbReference type="SUPFAM" id="SSF53187">
    <property type="entry name" value="Zn-dependent exopeptidases"/>
    <property type="match status" value="1"/>
</dbReference>